<sequence>MDRQSAVAQLRAAAEQFARVHLDACDRWSVGLSGGPDSLALTAVAARLWPTTALIVDHGLQPGSATVAETARIQAISLGCVDARVLCVQVGAAGGREAAARSARYSALEEHRDGPVLLAHTLDDQAETVLLGLGRGSGARSIAGMRPYDPPWCRPLLGVRRSVTHAACRELGLTAWQDPHNTDRRFTRTRLRTEVLPLLEDVLGGGVAEALARTATALREDTDLIDTIAAQALPGAAVAGSRGQELSTSALTALPDAVRRRVIRGWLLAGGATGLTDRQIRGVDRLVTAWRGQGGVAVGSTLRGQRLVAGRRDGVLVLRREPV</sequence>
<keyword id="KW-0067">ATP-binding</keyword>
<keyword id="KW-0963">Cytoplasm</keyword>
<keyword id="KW-0436">Ligase</keyword>
<keyword id="KW-0547">Nucleotide-binding</keyword>
<keyword id="KW-1185">Reference proteome</keyword>
<keyword id="KW-0819">tRNA processing</keyword>
<protein>
    <recommendedName>
        <fullName evidence="1">tRNA(Ile)-lysidine synthase</fullName>
        <ecNumber evidence="1">6.3.4.19</ecNumber>
    </recommendedName>
    <alternativeName>
        <fullName evidence="1">tRNA(Ile)-2-lysyl-cytidine synthase</fullName>
    </alternativeName>
    <alternativeName>
        <fullName evidence="1">tRNA(Ile)-lysidine synthetase</fullName>
    </alternativeName>
</protein>
<comment type="function">
    <text evidence="1">Ligates lysine onto the cytidine present at position 34 of the AUA codon-specific tRNA(Ile) that contains the anticodon CAU, in an ATP-dependent manner. Cytidine is converted to lysidine, thus changing the amino acid specificity of the tRNA from methionine to isoleucine.</text>
</comment>
<comment type="catalytic activity">
    <reaction evidence="1">
        <text>cytidine(34) in tRNA(Ile2) + L-lysine + ATP = lysidine(34) in tRNA(Ile2) + AMP + diphosphate + H(+)</text>
        <dbReference type="Rhea" id="RHEA:43744"/>
        <dbReference type="Rhea" id="RHEA-COMP:10625"/>
        <dbReference type="Rhea" id="RHEA-COMP:10670"/>
        <dbReference type="ChEBI" id="CHEBI:15378"/>
        <dbReference type="ChEBI" id="CHEBI:30616"/>
        <dbReference type="ChEBI" id="CHEBI:32551"/>
        <dbReference type="ChEBI" id="CHEBI:33019"/>
        <dbReference type="ChEBI" id="CHEBI:82748"/>
        <dbReference type="ChEBI" id="CHEBI:83665"/>
        <dbReference type="ChEBI" id="CHEBI:456215"/>
        <dbReference type="EC" id="6.3.4.19"/>
    </reaction>
</comment>
<comment type="subcellular location">
    <subcellularLocation>
        <location evidence="1">Cytoplasm</location>
    </subcellularLocation>
</comment>
<comment type="domain">
    <text>The N-terminal region contains the highly conserved SGGXDS motif, predicted to be a P-loop motif involved in ATP binding.</text>
</comment>
<comment type="similarity">
    <text evidence="1">Belongs to the tRNA(Ile)-lysidine synthase family.</text>
</comment>
<proteinExistence type="inferred from homology"/>
<accession>P67152</accession>
<accession>A0A1R3Y4R3</accession>
<accession>O06382</accession>
<accession>X2BPE9</accession>
<organism>
    <name type="scientific">Mycobacterium bovis (strain ATCC BAA-935 / AF2122/97)</name>
    <dbReference type="NCBI Taxonomy" id="233413"/>
    <lineage>
        <taxon>Bacteria</taxon>
        <taxon>Bacillati</taxon>
        <taxon>Actinomycetota</taxon>
        <taxon>Actinomycetes</taxon>
        <taxon>Mycobacteriales</taxon>
        <taxon>Mycobacteriaceae</taxon>
        <taxon>Mycobacterium</taxon>
        <taxon>Mycobacterium tuberculosis complex</taxon>
    </lineage>
</organism>
<name>TILS_MYCBO</name>
<reference key="1">
    <citation type="journal article" date="2003" name="Proc. Natl. Acad. Sci. U.S.A.">
        <title>The complete genome sequence of Mycobacterium bovis.</title>
        <authorList>
            <person name="Garnier T."/>
            <person name="Eiglmeier K."/>
            <person name="Camus J.-C."/>
            <person name="Medina N."/>
            <person name="Mansoor H."/>
            <person name="Pryor M."/>
            <person name="Duthoy S."/>
            <person name="Grondin S."/>
            <person name="Lacroix C."/>
            <person name="Monsempe C."/>
            <person name="Simon S."/>
            <person name="Harris B."/>
            <person name="Atkin R."/>
            <person name="Doggett J."/>
            <person name="Mayes R."/>
            <person name="Keating L."/>
            <person name="Wheeler P.R."/>
            <person name="Parkhill J."/>
            <person name="Barrell B.G."/>
            <person name="Cole S.T."/>
            <person name="Gordon S.V."/>
            <person name="Hewinson R.G."/>
        </authorList>
    </citation>
    <scope>NUCLEOTIDE SEQUENCE [LARGE SCALE GENOMIC DNA]</scope>
    <source>
        <strain>ATCC BAA-935 / AF2122/97</strain>
    </source>
</reference>
<reference key="2">
    <citation type="journal article" date="2017" name="Genome Announc.">
        <title>Updated reference genome sequence and annotation of Mycobacterium bovis AF2122/97.</title>
        <authorList>
            <person name="Malone K.M."/>
            <person name="Farrell D."/>
            <person name="Stuber T.P."/>
            <person name="Schubert O.T."/>
            <person name="Aebersold R."/>
            <person name="Robbe-Austerman S."/>
            <person name="Gordon S.V."/>
        </authorList>
    </citation>
    <scope>NUCLEOTIDE SEQUENCE [LARGE SCALE GENOMIC DNA]</scope>
    <scope>GENOME REANNOTATION</scope>
    <source>
        <strain>ATCC BAA-935 / AF2122/97</strain>
    </source>
</reference>
<gene>
    <name evidence="1" type="primary">tilS</name>
    <name type="ordered locus">BQ2027_MB3649C</name>
</gene>
<dbReference type="EC" id="6.3.4.19" evidence="1"/>
<dbReference type="EMBL" id="LT708304">
    <property type="protein sequence ID" value="SIU02277.1"/>
    <property type="molecule type" value="Genomic_DNA"/>
</dbReference>
<dbReference type="RefSeq" id="NP_857288.1">
    <property type="nucleotide sequence ID" value="NC_002945.3"/>
</dbReference>
<dbReference type="RefSeq" id="WP_003899608.1">
    <property type="nucleotide sequence ID" value="NC_002945.4"/>
</dbReference>
<dbReference type="SMR" id="P67152"/>
<dbReference type="KEGG" id="mbo:BQ2027_MB3649C"/>
<dbReference type="PATRIC" id="fig|233413.5.peg.3994"/>
<dbReference type="Proteomes" id="UP000001419">
    <property type="component" value="Chromosome"/>
</dbReference>
<dbReference type="GO" id="GO:0005737">
    <property type="term" value="C:cytoplasm"/>
    <property type="evidence" value="ECO:0007669"/>
    <property type="project" value="UniProtKB-SubCell"/>
</dbReference>
<dbReference type="GO" id="GO:0005524">
    <property type="term" value="F:ATP binding"/>
    <property type="evidence" value="ECO:0007669"/>
    <property type="project" value="UniProtKB-UniRule"/>
</dbReference>
<dbReference type="GO" id="GO:0032267">
    <property type="term" value="F:tRNA(Ile)-lysidine synthase activity"/>
    <property type="evidence" value="ECO:0007669"/>
    <property type="project" value="UniProtKB-EC"/>
</dbReference>
<dbReference type="GO" id="GO:0006400">
    <property type="term" value="P:tRNA modification"/>
    <property type="evidence" value="ECO:0007669"/>
    <property type="project" value="UniProtKB-UniRule"/>
</dbReference>
<dbReference type="CDD" id="cd01992">
    <property type="entry name" value="TilS_N"/>
    <property type="match status" value="1"/>
</dbReference>
<dbReference type="Gene3D" id="1.20.59.20">
    <property type="match status" value="1"/>
</dbReference>
<dbReference type="Gene3D" id="3.40.50.620">
    <property type="entry name" value="HUPs"/>
    <property type="match status" value="1"/>
</dbReference>
<dbReference type="HAMAP" id="MF_01161">
    <property type="entry name" value="tRNA_Ile_lys_synt"/>
    <property type="match status" value="1"/>
</dbReference>
<dbReference type="InterPro" id="IPR014729">
    <property type="entry name" value="Rossmann-like_a/b/a_fold"/>
</dbReference>
<dbReference type="InterPro" id="IPR011063">
    <property type="entry name" value="TilS/TtcA_N"/>
</dbReference>
<dbReference type="InterPro" id="IPR012094">
    <property type="entry name" value="tRNA_Ile_lys_synt"/>
</dbReference>
<dbReference type="InterPro" id="IPR012795">
    <property type="entry name" value="tRNA_Ile_lys_synt_N"/>
</dbReference>
<dbReference type="InterPro" id="IPR015262">
    <property type="entry name" value="tRNA_Ile_lys_synt_subst-bd"/>
</dbReference>
<dbReference type="NCBIfam" id="TIGR02432">
    <property type="entry name" value="lysidine_TilS_N"/>
    <property type="match status" value="1"/>
</dbReference>
<dbReference type="PANTHER" id="PTHR43033">
    <property type="entry name" value="TRNA(ILE)-LYSIDINE SYNTHASE-RELATED"/>
    <property type="match status" value="1"/>
</dbReference>
<dbReference type="PANTHER" id="PTHR43033:SF1">
    <property type="entry name" value="TRNA(ILE)-LYSIDINE SYNTHASE-RELATED"/>
    <property type="match status" value="1"/>
</dbReference>
<dbReference type="Pfam" id="PF01171">
    <property type="entry name" value="ATP_bind_3"/>
    <property type="match status" value="1"/>
</dbReference>
<dbReference type="Pfam" id="PF09179">
    <property type="entry name" value="TilS"/>
    <property type="match status" value="1"/>
</dbReference>
<dbReference type="SUPFAM" id="SSF52402">
    <property type="entry name" value="Adenine nucleotide alpha hydrolases-like"/>
    <property type="match status" value="1"/>
</dbReference>
<dbReference type="SUPFAM" id="SSF82829">
    <property type="entry name" value="MesJ substrate recognition domain-like"/>
    <property type="match status" value="1"/>
</dbReference>
<feature type="chain" id="PRO_0000181722" description="tRNA(Ile)-lysidine synthase">
    <location>
        <begin position="1"/>
        <end position="323"/>
    </location>
</feature>
<feature type="binding site" evidence="1">
    <location>
        <begin position="33"/>
        <end position="38"/>
    </location>
    <ligand>
        <name>ATP</name>
        <dbReference type="ChEBI" id="CHEBI:30616"/>
    </ligand>
</feature>
<evidence type="ECO:0000255" key="1">
    <source>
        <dbReference type="HAMAP-Rule" id="MF_01161"/>
    </source>
</evidence>